<accession>Q18CI1</accession>
<organism>
    <name type="scientific">Clostridioides difficile (strain 630)</name>
    <name type="common">Peptoclostridium difficile</name>
    <dbReference type="NCBI Taxonomy" id="272563"/>
    <lineage>
        <taxon>Bacteria</taxon>
        <taxon>Bacillati</taxon>
        <taxon>Bacillota</taxon>
        <taxon>Clostridia</taxon>
        <taxon>Peptostreptococcales</taxon>
        <taxon>Peptostreptococcaceae</taxon>
        <taxon>Clostridioides</taxon>
    </lineage>
</organism>
<keyword id="KW-1185">Reference proteome</keyword>
<keyword id="KW-0687">Ribonucleoprotein</keyword>
<keyword id="KW-0689">Ribosomal protein</keyword>
<reference key="1">
    <citation type="journal article" date="2006" name="Nat. Genet.">
        <title>The multidrug-resistant human pathogen Clostridium difficile has a highly mobile, mosaic genome.</title>
        <authorList>
            <person name="Sebaihia M."/>
            <person name="Wren B.W."/>
            <person name="Mullany P."/>
            <person name="Fairweather N.F."/>
            <person name="Minton N."/>
            <person name="Stabler R."/>
            <person name="Thomson N.R."/>
            <person name="Roberts A.P."/>
            <person name="Cerdeno-Tarraga A.M."/>
            <person name="Wang H."/>
            <person name="Holden M.T.G."/>
            <person name="Wright A."/>
            <person name="Churcher C."/>
            <person name="Quail M.A."/>
            <person name="Baker S."/>
            <person name="Bason N."/>
            <person name="Brooks K."/>
            <person name="Chillingworth T."/>
            <person name="Cronin A."/>
            <person name="Davis P."/>
            <person name="Dowd L."/>
            <person name="Fraser A."/>
            <person name="Feltwell T."/>
            <person name="Hance Z."/>
            <person name="Holroyd S."/>
            <person name="Jagels K."/>
            <person name="Moule S."/>
            <person name="Mungall K."/>
            <person name="Price C."/>
            <person name="Rabbinowitsch E."/>
            <person name="Sharp S."/>
            <person name="Simmonds M."/>
            <person name="Stevens K."/>
            <person name="Unwin L."/>
            <person name="Whithead S."/>
            <person name="Dupuy B."/>
            <person name="Dougan G."/>
            <person name="Barrell B."/>
            <person name="Parkhill J."/>
        </authorList>
    </citation>
    <scope>NUCLEOTIDE SEQUENCE [LARGE SCALE GENOMIC DNA]</scope>
    <source>
        <strain>630</strain>
    </source>
</reference>
<feature type="chain" id="PRO_0000302183" description="Large ribosomal subunit protein bL36">
    <location>
        <begin position="1"/>
        <end position="37"/>
    </location>
</feature>
<dbReference type="EMBL" id="AM180355">
    <property type="protein sequence ID" value="CAJ66913.1"/>
    <property type="molecule type" value="Genomic_DNA"/>
</dbReference>
<dbReference type="RefSeq" id="WP_002509257.1">
    <property type="nucleotide sequence ID" value="NZ_JAUPES010000043.1"/>
</dbReference>
<dbReference type="RefSeq" id="YP_001086562.1">
    <property type="nucleotide sequence ID" value="NC_009089.1"/>
</dbReference>
<dbReference type="SMR" id="Q18CI1"/>
<dbReference type="STRING" id="272563.CD630_00941"/>
<dbReference type="EnsemblBacteria" id="CAJ66913">
    <property type="protein sequence ID" value="CAJ66913"/>
    <property type="gene ID" value="CD630_00941"/>
</dbReference>
<dbReference type="GeneID" id="98001104"/>
<dbReference type="KEGG" id="cdf:CD630_00941"/>
<dbReference type="KEGG" id="pdc:CDIF630_00164"/>
<dbReference type="PATRIC" id="fig|272563.120.peg.104"/>
<dbReference type="eggNOG" id="COG0257">
    <property type="taxonomic scope" value="Bacteria"/>
</dbReference>
<dbReference type="OrthoDB" id="9802520at2"/>
<dbReference type="PhylomeDB" id="Q18CI1"/>
<dbReference type="BioCyc" id="PDIF272563:G12WB-152-MONOMER"/>
<dbReference type="Proteomes" id="UP000001978">
    <property type="component" value="Chromosome"/>
</dbReference>
<dbReference type="GO" id="GO:0005737">
    <property type="term" value="C:cytoplasm"/>
    <property type="evidence" value="ECO:0007669"/>
    <property type="project" value="UniProtKB-ARBA"/>
</dbReference>
<dbReference type="GO" id="GO:1990904">
    <property type="term" value="C:ribonucleoprotein complex"/>
    <property type="evidence" value="ECO:0007669"/>
    <property type="project" value="UniProtKB-KW"/>
</dbReference>
<dbReference type="GO" id="GO:0005840">
    <property type="term" value="C:ribosome"/>
    <property type="evidence" value="ECO:0007669"/>
    <property type="project" value="UniProtKB-KW"/>
</dbReference>
<dbReference type="GO" id="GO:0003735">
    <property type="term" value="F:structural constituent of ribosome"/>
    <property type="evidence" value="ECO:0007669"/>
    <property type="project" value="InterPro"/>
</dbReference>
<dbReference type="GO" id="GO:0006412">
    <property type="term" value="P:translation"/>
    <property type="evidence" value="ECO:0007669"/>
    <property type="project" value="UniProtKB-UniRule"/>
</dbReference>
<dbReference type="HAMAP" id="MF_00251">
    <property type="entry name" value="Ribosomal_bL36"/>
    <property type="match status" value="1"/>
</dbReference>
<dbReference type="InterPro" id="IPR000473">
    <property type="entry name" value="Ribosomal_bL36"/>
</dbReference>
<dbReference type="InterPro" id="IPR035977">
    <property type="entry name" value="Ribosomal_bL36_sp"/>
</dbReference>
<dbReference type="NCBIfam" id="TIGR01022">
    <property type="entry name" value="rpmJ_bact"/>
    <property type="match status" value="1"/>
</dbReference>
<dbReference type="PANTHER" id="PTHR42888">
    <property type="entry name" value="50S RIBOSOMAL PROTEIN L36, CHLOROPLASTIC"/>
    <property type="match status" value="1"/>
</dbReference>
<dbReference type="PANTHER" id="PTHR42888:SF1">
    <property type="entry name" value="LARGE RIBOSOMAL SUBUNIT PROTEIN BL36C"/>
    <property type="match status" value="1"/>
</dbReference>
<dbReference type="Pfam" id="PF00444">
    <property type="entry name" value="Ribosomal_L36"/>
    <property type="match status" value="1"/>
</dbReference>
<dbReference type="SUPFAM" id="SSF57840">
    <property type="entry name" value="Ribosomal protein L36"/>
    <property type="match status" value="1"/>
</dbReference>
<dbReference type="PROSITE" id="PS00828">
    <property type="entry name" value="RIBOSOMAL_L36"/>
    <property type="match status" value="1"/>
</dbReference>
<comment type="similarity">
    <text evidence="1">Belongs to the bacterial ribosomal protein bL36 family.</text>
</comment>
<proteinExistence type="inferred from homology"/>
<sequence>MKVRPSVKPICEKCKVIKRKGKVMVICENPKHKQKQG</sequence>
<gene>
    <name evidence="1" type="primary">rpmJ</name>
    <name type="ordered locus">CD630_00941</name>
    <name type="ORF">CD0094A</name>
</gene>
<name>RL36_CLOD6</name>
<protein>
    <recommendedName>
        <fullName evidence="1">Large ribosomal subunit protein bL36</fullName>
    </recommendedName>
    <alternativeName>
        <fullName evidence="2">50S ribosomal protein L36</fullName>
    </alternativeName>
</protein>
<evidence type="ECO:0000255" key="1">
    <source>
        <dbReference type="HAMAP-Rule" id="MF_00251"/>
    </source>
</evidence>
<evidence type="ECO:0000305" key="2"/>